<sequence>MSEKIYDVPAEWAKRAFVDDAKYQEMYASSIRDPNGFWAEQAKRVDWIHAPTKIENVSYAPGNISIKWFEDGVLNAAYNCIDRHLATRADQTAIIWEGDDPADSKHITYRQLHDEVCKMANILRNRNVKKGDRVTIYLPMIPEAAYAMLACARIGAIHSVVFAGFSPDSLAQRIKDCDSKVVITADEGLRGGRKVPLKANVDAALNKVDNVDWVVVVKRTGGKIEMNPTRDLWYHEAAEMVTTECPVEHMNAEDALFILYTSGSTGQPKGVLHTTGGYLVYASMTHQYVFDYHEGDVYWCTADVGWVTGHSYILYGPLANGAVTLMFEGVPNYPDNSRFWNVIDKHKVNIFYTAPTAIRALMQGGDGPVTKTSRESLRLLGSVGEPINPEAWEWYHRVVGDNRCPIVDTWWQTETGGILITPLPGATRLKPGSATRPFFGVVPEIVDADGNTLEGATEGNLCLTRSWPGQMRTVYGDHARFEMTYFSTYKGKYFTGDGCRRDADGYYWITGRVDDVINVSGHRMGTAEVESALVAHPKVSEAAVVGYPHDIKGQGIYAYVTLMAGETPSEELRKELVGWVRKEIGPIASPDQIQFSQGLPKTRSGKIMRRILRKIAEDEPGALGDTSTLADPAVVDDLVQHRQNRKEKQA</sequence>
<keyword id="KW-0007">Acetylation</keyword>
<keyword id="KW-0067">ATP-binding</keyword>
<keyword id="KW-0436">Ligase</keyword>
<keyword id="KW-0460">Magnesium</keyword>
<keyword id="KW-0479">Metal-binding</keyword>
<keyword id="KW-0547">Nucleotide-binding</keyword>
<keyword id="KW-1185">Reference proteome</keyword>
<accession>A4YK73</accession>
<comment type="function">
    <text evidence="1">Catalyzes the conversion of acetate into acetyl-CoA (AcCoA), an essential intermediate at the junction of anabolic and catabolic pathways. AcsA undergoes a two-step reaction. In the first half reaction, AcsA combines acetate with ATP to form acetyl-adenylate (AcAMP) intermediate. In the second half reaction, it can then transfer the acetyl group from AcAMP to the sulfhydryl group of CoA, forming the product AcCoA.</text>
</comment>
<comment type="catalytic activity">
    <reaction evidence="1">
        <text>acetate + ATP + CoA = acetyl-CoA + AMP + diphosphate</text>
        <dbReference type="Rhea" id="RHEA:23176"/>
        <dbReference type="ChEBI" id="CHEBI:30089"/>
        <dbReference type="ChEBI" id="CHEBI:30616"/>
        <dbReference type="ChEBI" id="CHEBI:33019"/>
        <dbReference type="ChEBI" id="CHEBI:57287"/>
        <dbReference type="ChEBI" id="CHEBI:57288"/>
        <dbReference type="ChEBI" id="CHEBI:456215"/>
        <dbReference type="EC" id="6.2.1.1"/>
    </reaction>
</comment>
<comment type="cofactor">
    <cofactor evidence="1">
        <name>Mg(2+)</name>
        <dbReference type="ChEBI" id="CHEBI:18420"/>
    </cofactor>
</comment>
<comment type="PTM">
    <text evidence="1">Acetylated. Deacetylation by the SIR2-homolog deacetylase activates the enzyme.</text>
</comment>
<comment type="similarity">
    <text evidence="1">Belongs to the ATP-dependent AMP-binding enzyme family.</text>
</comment>
<gene>
    <name evidence="1" type="primary">acsA</name>
    <name type="ordered locus">BRADO0344</name>
</gene>
<dbReference type="EC" id="6.2.1.1" evidence="1"/>
<dbReference type="EMBL" id="CU234118">
    <property type="protein sequence ID" value="CAL74299.1"/>
    <property type="molecule type" value="Genomic_DNA"/>
</dbReference>
<dbReference type="RefSeq" id="WP_011923580.1">
    <property type="nucleotide sequence ID" value="NC_009445.1"/>
</dbReference>
<dbReference type="SMR" id="A4YK73"/>
<dbReference type="STRING" id="114615.BRADO0344"/>
<dbReference type="KEGG" id="bra:BRADO0344"/>
<dbReference type="eggNOG" id="COG0365">
    <property type="taxonomic scope" value="Bacteria"/>
</dbReference>
<dbReference type="HOGENOM" id="CLU_000022_3_6_5"/>
<dbReference type="OrthoDB" id="9803968at2"/>
<dbReference type="Proteomes" id="UP000001994">
    <property type="component" value="Chromosome"/>
</dbReference>
<dbReference type="GO" id="GO:0005829">
    <property type="term" value="C:cytosol"/>
    <property type="evidence" value="ECO:0007669"/>
    <property type="project" value="TreeGrafter"/>
</dbReference>
<dbReference type="GO" id="GO:0003987">
    <property type="term" value="F:acetate-CoA ligase activity"/>
    <property type="evidence" value="ECO:0007669"/>
    <property type="project" value="UniProtKB-UniRule"/>
</dbReference>
<dbReference type="GO" id="GO:0016208">
    <property type="term" value="F:AMP binding"/>
    <property type="evidence" value="ECO:0007669"/>
    <property type="project" value="InterPro"/>
</dbReference>
<dbReference type="GO" id="GO:0005524">
    <property type="term" value="F:ATP binding"/>
    <property type="evidence" value="ECO:0007669"/>
    <property type="project" value="UniProtKB-KW"/>
</dbReference>
<dbReference type="GO" id="GO:0046872">
    <property type="term" value="F:metal ion binding"/>
    <property type="evidence" value="ECO:0007669"/>
    <property type="project" value="UniProtKB-KW"/>
</dbReference>
<dbReference type="GO" id="GO:0019427">
    <property type="term" value="P:acetyl-CoA biosynthetic process from acetate"/>
    <property type="evidence" value="ECO:0007669"/>
    <property type="project" value="InterPro"/>
</dbReference>
<dbReference type="CDD" id="cd05966">
    <property type="entry name" value="ACS"/>
    <property type="match status" value="1"/>
</dbReference>
<dbReference type="FunFam" id="3.30.300.30:FF:000004">
    <property type="entry name" value="Acetyl-coenzyme A synthetase"/>
    <property type="match status" value="1"/>
</dbReference>
<dbReference type="FunFam" id="3.40.50.12780:FF:000001">
    <property type="entry name" value="Acetyl-coenzyme A synthetase"/>
    <property type="match status" value="1"/>
</dbReference>
<dbReference type="Gene3D" id="3.30.300.30">
    <property type="match status" value="1"/>
</dbReference>
<dbReference type="Gene3D" id="3.40.50.12780">
    <property type="entry name" value="N-terminal domain of ligase-like"/>
    <property type="match status" value="1"/>
</dbReference>
<dbReference type="HAMAP" id="MF_01123">
    <property type="entry name" value="Ac_CoA_synth"/>
    <property type="match status" value="1"/>
</dbReference>
<dbReference type="InterPro" id="IPR011904">
    <property type="entry name" value="Ac_CoA_lig"/>
</dbReference>
<dbReference type="InterPro" id="IPR032387">
    <property type="entry name" value="ACAS_N"/>
</dbReference>
<dbReference type="InterPro" id="IPR025110">
    <property type="entry name" value="AMP-bd_C"/>
</dbReference>
<dbReference type="InterPro" id="IPR045851">
    <property type="entry name" value="AMP-bd_C_sf"/>
</dbReference>
<dbReference type="InterPro" id="IPR020845">
    <property type="entry name" value="AMP-binding_CS"/>
</dbReference>
<dbReference type="InterPro" id="IPR000873">
    <property type="entry name" value="AMP-dep_synth/lig_dom"/>
</dbReference>
<dbReference type="InterPro" id="IPR042099">
    <property type="entry name" value="ANL_N_sf"/>
</dbReference>
<dbReference type="NCBIfam" id="TIGR02188">
    <property type="entry name" value="Ac_CoA_lig_AcsA"/>
    <property type="match status" value="1"/>
</dbReference>
<dbReference type="NCBIfam" id="NF001208">
    <property type="entry name" value="PRK00174.1"/>
    <property type="match status" value="1"/>
</dbReference>
<dbReference type="PANTHER" id="PTHR24095">
    <property type="entry name" value="ACETYL-COENZYME A SYNTHETASE"/>
    <property type="match status" value="1"/>
</dbReference>
<dbReference type="PANTHER" id="PTHR24095:SF14">
    <property type="entry name" value="ACETYL-COENZYME A SYNTHETASE 1"/>
    <property type="match status" value="1"/>
</dbReference>
<dbReference type="Pfam" id="PF16177">
    <property type="entry name" value="ACAS_N"/>
    <property type="match status" value="1"/>
</dbReference>
<dbReference type="Pfam" id="PF00501">
    <property type="entry name" value="AMP-binding"/>
    <property type="match status" value="1"/>
</dbReference>
<dbReference type="Pfam" id="PF13193">
    <property type="entry name" value="AMP-binding_C"/>
    <property type="match status" value="1"/>
</dbReference>
<dbReference type="SUPFAM" id="SSF56801">
    <property type="entry name" value="Acetyl-CoA synthetase-like"/>
    <property type="match status" value="1"/>
</dbReference>
<dbReference type="PROSITE" id="PS00455">
    <property type="entry name" value="AMP_BINDING"/>
    <property type="match status" value="1"/>
</dbReference>
<feature type="chain" id="PRO_1000065273" description="Acetyl-coenzyme A synthetase">
    <location>
        <begin position="1"/>
        <end position="650"/>
    </location>
</feature>
<feature type="binding site" evidence="1">
    <location>
        <begin position="190"/>
        <end position="193"/>
    </location>
    <ligand>
        <name>CoA</name>
        <dbReference type="ChEBI" id="CHEBI:57287"/>
    </ligand>
</feature>
<feature type="binding site" evidence="1">
    <location>
        <position position="308"/>
    </location>
    <ligand>
        <name>CoA</name>
        <dbReference type="ChEBI" id="CHEBI:57287"/>
    </ligand>
</feature>
<feature type="binding site" evidence="1">
    <location>
        <position position="332"/>
    </location>
    <ligand>
        <name>CoA</name>
        <dbReference type="ChEBI" id="CHEBI:57287"/>
    </ligand>
</feature>
<feature type="binding site" evidence="1">
    <location>
        <begin position="384"/>
        <end position="386"/>
    </location>
    <ligand>
        <name>ATP</name>
        <dbReference type="ChEBI" id="CHEBI:30616"/>
    </ligand>
</feature>
<feature type="binding site" evidence="1">
    <location>
        <begin position="408"/>
        <end position="413"/>
    </location>
    <ligand>
        <name>ATP</name>
        <dbReference type="ChEBI" id="CHEBI:30616"/>
    </ligand>
</feature>
<feature type="binding site" evidence="1">
    <location>
        <position position="497"/>
    </location>
    <ligand>
        <name>ATP</name>
        <dbReference type="ChEBI" id="CHEBI:30616"/>
    </ligand>
</feature>
<feature type="binding site" evidence="1">
    <location>
        <position position="512"/>
    </location>
    <ligand>
        <name>ATP</name>
        <dbReference type="ChEBI" id="CHEBI:30616"/>
    </ligand>
</feature>
<feature type="binding site" evidence="1">
    <location>
        <position position="520"/>
    </location>
    <ligand>
        <name>CoA</name>
        <dbReference type="ChEBI" id="CHEBI:57287"/>
    </ligand>
</feature>
<feature type="binding site" evidence="1">
    <location>
        <position position="523"/>
    </location>
    <ligand>
        <name>ATP</name>
        <dbReference type="ChEBI" id="CHEBI:30616"/>
    </ligand>
</feature>
<feature type="binding site" evidence="1">
    <location>
        <position position="534"/>
    </location>
    <ligand>
        <name>Mg(2+)</name>
        <dbReference type="ChEBI" id="CHEBI:18420"/>
    </ligand>
</feature>
<feature type="binding site" evidence="1">
    <location>
        <position position="536"/>
    </location>
    <ligand>
        <name>Mg(2+)</name>
        <dbReference type="ChEBI" id="CHEBI:18420"/>
    </ligand>
</feature>
<feature type="binding site" evidence="1">
    <location>
        <position position="539"/>
    </location>
    <ligand>
        <name>Mg(2+)</name>
        <dbReference type="ChEBI" id="CHEBI:18420"/>
    </ligand>
</feature>
<feature type="binding site">
    <location>
        <position position="581"/>
    </location>
    <ligand>
        <name>CoA</name>
        <dbReference type="ChEBI" id="CHEBI:57287"/>
    </ligand>
</feature>
<feature type="modified residue" description="N6-acetyllysine" evidence="1">
    <location>
        <position position="606"/>
    </location>
</feature>
<organism>
    <name type="scientific">Bradyrhizobium sp. (strain ORS 278)</name>
    <dbReference type="NCBI Taxonomy" id="114615"/>
    <lineage>
        <taxon>Bacteria</taxon>
        <taxon>Pseudomonadati</taxon>
        <taxon>Pseudomonadota</taxon>
        <taxon>Alphaproteobacteria</taxon>
        <taxon>Hyphomicrobiales</taxon>
        <taxon>Nitrobacteraceae</taxon>
        <taxon>Bradyrhizobium</taxon>
    </lineage>
</organism>
<name>ACSA_BRASO</name>
<evidence type="ECO:0000255" key="1">
    <source>
        <dbReference type="HAMAP-Rule" id="MF_01123"/>
    </source>
</evidence>
<proteinExistence type="inferred from homology"/>
<reference key="1">
    <citation type="journal article" date="2007" name="Science">
        <title>Legumes symbioses: absence of nod genes in photosynthetic bradyrhizobia.</title>
        <authorList>
            <person name="Giraud E."/>
            <person name="Moulin L."/>
            <person name="Vallenet D."/>
            <person name="Barbe V."/>
            <person name="Cytryn E."/>
            <person name="Avarre J.-C."/>
            <person name="Jaubert M."/>
            <person name="Simon D."/>
            <person name="Cartieaux F."/>
            <person name="Prin Y."/>
            <person name="Bena G."/>
            <person name="Hannibal L."/>
            <person name="Fardoux J."/>
            <person name="Kojadinovic M."/>
            <person name="Vuillet L."/>
            <person name="Lajus A."/>
            <person name="Cruveiller S."/>
            <person name="Rouy Z."/>
            <person name="Mangenot S."/>
            <person name="Segurens B."/>
            <person name="Dossat C."/>
            <person name="Franck W.L."/>
            <person name="Chang W.-S."/>
            <person name="Saunders E."/>
            <person name="Bruce D."/>
            <person name="Richardson P."/>
            <person name="Normand P."/>
            <person name="Dreyfus B."/>
            <person name="Pignol D."/>
            <person name="Stacey G."/>
            <person name="Emerich D."/>
            <person name="Vermeglio A."/>
            <person name="Medigue C."/>
            <person name="Sadowsky M."/>
        </authorList>
    </citation>
    <scope>NUCLEOTIDE SEQUENCE [LARGE SCALE GENOMIC DNA]</scope>
    <source>
        <strain>ORS 278</strain>
    </source>
</reference>
<protein>
    <recommendedName>
        <fullName evidence="1">Acetyl-coenzyme A synthetase</fullName>
        <shortName evidence="1">AcCoA synthetase</shortName>
        <shortName evidence="1">Acs</shortName>
        <ecNumber evidence="1">6.2.1.1</ecNumber>
    </recommendedName>
    <alternativeName>
        <fullName evidence="1">Acetate--CoA ligase</fullName>
    </alternativeName>
    <alternativeName>
        <fullName evidence="1">Acyl-activating enzyme</fullName>
    </alternativeName>
</protein>